<accession>B1VQW8</accession>
<organism>
    <name type="scientific">Streptomyces griseus subsp. griseus (strain JCM 4626 / CBS 651.72 / NBRC 13350 / KCC S-0626 / ISP 5235)</name>
    <dbReference type="NCBI Taxonomy" id="455632"/>
    <lineage>
        <taxon>Bacteria</taxon>
        <taxon>Bacillati</taxon>
        <taxon>Actinomycetota</taxon>
        <taxon>Actinomycetes</taxon>
        <taxon>Kitasatosporales</taxon>
        <taxon>Streptomycetaceae</taxon>
        <taxon>Streptomyces</taxon>
    </lineage>
</organism>
<gene>
    <name evidence="1" type="primary">aspS</name>
    <name type="ordered locus">SGR_3790</name>
</gene>
<comment type="function">
    <text evidence="1">Catalyzes the attachment of L-aspartate to tRNA(Asp) in a two-step reaction: L-aspartate is first activated by ATP to form Asp-AMP and then transferred to the acceptor end of tRNA(Asp).</text>
</comment>
<comment type="catalytic activity">
    <reaction evidence="1">
        <text>tRNA(Asp) + L-aspartate + ATP = L-aspartyl-tRNA(Asp) + AMP + diphosphate</text>
        <dbReference type="Rhea" id="RHEA:19649"/>
        <dbReference type="Rhea" id="RHEA-COMP:9660"/>
        <dbReference type="Rhea" id="RHEA-COMP:9678"/>
        <dbReference type="ChEBI" id="CHEBI:29991"/>
        <dbReference type="ChEBI" id="CHEBI:30616"/>
        <dbReference type="ChEBI" id="CHEBI:33019"/>
        <dbReference type="ChEBI" id="CHEBI:78442"/>
        <dbReference type="ChEBI" id="CHEBI:78516"/>
        <dbReference type="ChEBI" id="CHEBI:456215"/>
        <dbReference type="EC" id="6.1.1.12"/>
    </reaction>
</comment>
<comment type="subunit">
    <text evidence="1">Homodimer.</text>
</comment>
<comment type="subcellular location">
    <subcellularLocation>
        <location evidence="1">Cytoplasm</location>
    </subcellularLocation>
</comment>
<comment type="similarity">
    <text evidence="1">Belongs to the class-II aminoacyl-tRNA synthetase family. Type 1 subfamily.</text>
</comment>
<feature type="chain" id="PRO_1000091046" description="Aspartate--tRNA ligase">
    <location>
        <begin position="1"/>
        <end position="599"/>
    </location>
</feature>
<feature type="region of interest" description="Aspartate" evidence="1">
    <location>
        <begin position="199"/>
        <end position="202"/>
    </location>
</feature>
<feature type="binding site" evidence="1">
    <location>
        <position position="175"/>
    </location>
    <ligand>
        <name>L-aspartate</name>
        <dbReference type="ChEBI" id="CHEBI:29991"/>
    </ligand>
</feature>
<feature type="binding site" evidence="1">
    <location>
        <begin position="221"/>
        <end position="223"/>
    </location>
    <ligand>
        <name>ATP</name>
        <dbReference type="ChEBI" id="CHEBI:30616"/>
    </ligand>
</feature>
<feature type="binding site" evidence="1">
    <location>
        <position position="221"/>
    </location>
    <ligand>
        <name>L-aspartate</name>
        <dbReference type="ChEBI" id="CHEBI:29991"/>
    </ligand>
</feature>
<feature type="binding site" evidence="1">
    <location>
        <position position="446"/>
    </location>
    <ligand>
        <name>L-aspartate</name>
        <dbReference type="ChEBI" id="CHEBI:29991"/>
    </ligand>
</feature>
<feature type="binding site" evidence="1">
    <location>
        <position position="480"/>
    </location>
    <ligand>
        <name>ATP</name>
        <dbReference type="ChEBI" id="CHEBI:30616"/>
    </ligand>
</feature>
<feature type="binding site" evidence="1">
    <location>
        <position position="487"/>
    </location>
    <ligand>
        <name>L-aspartate</name>
        <dbReference type="ChEBI" id="CHEBI:29991"/>
    </ligand>
</feature>
<feature type="binding site" evidence="1">
    <location>
        <begin position="532"/>
        <end position="535"/>
    </location>
    <ligand>
        <name>ATP</name>
        <dbReference type="ChEBI" id="CHEBI:30616"/>
    </ligand>
</feature>
<name>SYD_STRGG</name>
<reference key="1">
    <citation type="journal article" date="2008" name="J. Bacteriol.">
        <title>Genome sequence of the streptomycin-producing microorganism Streptomyces griseus IFO 13350.</title>
        <authorList>
            <person name="Ohnishi Y."/>
            <person name="Ishikawa J."/>
            <person name="Hara H."/>
            <person name="Suzuki H."/>
            <person name="Ikenoya M."/>
            <person name="Ikeda H."/>
            <person name="Yamashita A."/>
            <person name="Hattori M."/>
            <person name="Horinouchi S."/>
        </authorList>
    </citation>
    <scope>NUCLEOTIDE SEQUENCE [LARGE SCALE GENOMIC DNA]</scope>
    <source>
        <strain>JCM 4626 / CBS 651.72 / NBRC 13350 / KCC S-0626 / ISP 5235</strain>
    </source>
</reference>
<sequence>MHRYRSHTCGELRASDVGTDVRLSGWLHNRRDLGGILFIDLRDHYGLVQLVARPGTPGNDALAKLTKETVVRIDGKVSARGADNVNPELPTGEIEIEVTEVEVLGEAGPLPFTINTEDGVNEERRLEYRFLDLRRERMHRNIMLRSAVIASIRSKMVALGFNEMATPILTATSPEGARDFVVPSRLNPGKFYALPQAPQQFKQLLMISGFDRYFQIAPCFRDEDARADRSPGEFYQLDVEMSFVEQEDVFQPIEKLMTELFTEFGNGREVTSPFPRIPFRESMLKYGNDKPDLRAKLELVDISDVFADSGFKAFAGKHVRALPVPDTAGQSRKFFDGLGEYAVEHGAKGLAWVRVGEDGTLAGPIAKFLTETDVKTLTERLSLVPGHAVFFGAGEFDEVSKIMSAVRVEAAKRAGHFEEGVFRFCWIVDFPMYEKDEETGKIDFSHNPFSMPQGGLADLEEKDPLDILAWQYDIVCNGIELSSGAIRNHEPELMLKAFEIAGYDRETVEHEFAGMLRAFRLGAPPHGGIAPGVDRIVMLLADEPNIRETIAFPLNGNAQDLMMGAPTELDESRLRELNIQLRKPVAAKGANAPEKTAEK</sequence>
<keyword id="KW-0030">Aminoacyl-tRNA synthetase</keyword>
<keyword id="KW-0067">ATP-binding</keyword>
<keyword id="KW-0963">Cytoplasm</keyword>
<keyword id="KW-0436">Ligase</keyword>
<keyword id="KW-0547">Nucleotide-binding</keyword>
<keyword id="KW-0648">Protein biosynthesis</keyword>
<evidence type="ECO:0000255" key="1">
    <source>
        <dbReference type="HAMAP-Rule" id="MF_00044"/>
    </source>
</evidence>
<protein>
    <recommendedName>
        <fullName evidence="1">Aspartate--tRNA ligase</fullName>
        <ecNumber evidence="1">6.1.1.12</ecNumber>
    </recommendedName>
    <alternativeName>
        <fullName evidence="1">Aspartyl-tRNA synthetase</fullName>
        <shortName evidence="1">AspRS</shortName>
    </alternativeName>
</protein>
<dbReference type="EC" id="6.1.1.12" evidence="1"/>
<dbReference type="EMBL" id="AP009493">
    <property type="protein sequence ID" value="BAG20619.1"/>
    <property type="molecule type" value="Genomic_DNA"/>
</dbReference>
<dbReference type="RefSeq" id="WP_012380143.1">
    <property type="nucleotide sequence ID" value="NC_010572.1"/>
</dbReference>
<dbReference type="SMR" id="B1VQW8"/>
<dbReference type="KEGG" id="sgr:SGR_3790"/>
<dbReference type="PATRIC" id="fig|455632.4.peg.3859"/>
<dbReference type="eggNOG" id="COG0173">
    <property type="taxonomic scope" value="Bacteria"/>
</dbReference>
<dbReference type="HOGENOM" id="CLU_014330_3_2_11"/>
<dbReference type="Proteomes" id="UP000001685">
    <property type="component" value="Chromosome"/>
</dbReference>
<dbReference type="GO" id="GO:0005737">
    <property type="term" value="C:cytoplasm"/>
    <property type="evidence" value="ECO:0007669"/>
    <property type="project" value="UniProtKB-SubCell"/>
</dbReference>
<dbReference type="GO" id="GO:0004815">
    <property type="term" value="F:aspartate-tRNA ligase activity"/>
    <property type="evidence" value="ECO:0007669"/>
    <property type="project" value="UniProtKB-UniRule"/>
</dbReference>
<dbReference type="GO" id="GO:0005524">
    <property type="term" value="F:ATP binding"/>
    <property type="evidence" value="ECO:0007669"/>
    <property type="project" value="UniProtKB-UniRule"/>
</dbReference>
<dbReference type="GO" id="GO:0003676">
    <property type="term" value="F:nucleic acid binding"/>
    <property type="evidence" value="ECO:0007669"/>
    <property type="project" value="InterPro"/>
</dbReference>
<dbReference type="GO" id="GO:0006422">
    <property type="term" value="P:aspartyl-tRNA aminoacylation"/>
    <property type="evidence" value="ECO:0007669"/>
    <property type="project" value="UniProtKB-UniRule"/>
</dbReference>
<dbReference type="CDD" id="cd00777">
    <property type="entry name" value="AspRS_core"/>
    <property type="match status" value="1"/>
</dbReference>
<dbReference type="CDD" id="cd04317">
    <property type="entry name" value="EcAspRS_like_N"/>
    <property type="match status" value="1"/>
</dbReference>
<dbReference type="Gene3D" id="3.30.930.10">
    <property type="entry name" value="Bira Bifunctional Protein, Domain 2"/>
    <property type="match status" value="1"/>
</dbReference>
<dbReference type="Gene3D" id="3.30.1360.30">
    <property type="entry name" value="GAD-like domain"/>
    <property type="match status" value="1"/>
</dbReference>
<dbReference type="Gene3D" id="2.40.50.140">
    <property type="entry name" value="Nucleic acid-binding proteins"/>
    <property type="match status" value="1"/>
</dbReference>
<dbReference type="HAMAP" id="MF_00044">
    <property type="entry name" value="Asp_tRNA_synth_type1"/>
    <property type="match status" value="1"/>
</dbReference>
<dbReference type="InterPro" id="IPR004364">
    <property type="entry name" value="Aa-tRNA-synt_II"/>
</dbReference>
<dbReference type="InterPro" id="IPR006195">
    <property type="entry name" value="aa-tRNA-synth_II"/>
</dbReference>
<dbReference type="InterPro" id="IPR045864">
    <property type="entry name" value="aa-tRNA-synth_II/BPL/LPL"/>
</dbReference>
<dbReference type="InterPro" id="IPR004524">
    <property type="entry name" value="Asp-tRNA-ligase_1"/>
</dbReference>
<dbReference type="InterPro" id="IPR047089">
    <property type="entry name" value="Asp-tRNA-ligase_1_N"/>
</dbReference>
<dbReference type="InterPro" id="IPR002312">
    <property type="entry name" value="Asp/Asn-tRNA-synth_IIb"/>
</dbReference>
<dbReference type="InterPro" id="IPR047090">
    <property type="entry name" value="AspRS_core"/>
</dbReference>
<dbReference type="InterPro" id="IPR004115">
    <property type="entry name" value="GAD-like_sf"/>
</dbReference>
<dbReference type="InterPro" id="IPR029351">
    <property type="entry name" value="GAD_dom"/>
</dbReference>
<dbReference type="InterPro" id="IPR012340">
    <property type="entry name" value="NA-bd_OB-fold"/>
</dbReference>
<dbReference type="InterPro" id="IPR004365">
    <property type="entry name" value="NA-bd_OB_tRNA"/>
</dbReference>
<dbReference type="NCBIfam" id="TIGR00459">
    <property type="entry name" value="aspS_bact"/>
    <property type="match status" value="1"/>
</dbReference>
<dbReference type="NCBIfam" id="NF001750">
    <property type="entry name" value="PRK00476.1"/>
    <property type="match status" value="1"/>
</dbReference>
<dbReference type="PANTHER" id="PTHR22594:SF5">
    <property type="entry name" value="ASPARTATE--TRNA LIGASE, MITOCHONDRIAL"/>
    <property type="match status" value="1"/>
</dbReference>
<dbReference type="PANTHER" id="PTHR22594">
    <property type="entry name" value="ASPARTYL/LYSYL-TRNA SYNTHETASE"/>
    <property type="match status" value="1"/>
</dbReference>
<dbReference type="Pfam" id="PF02938">
    <property type="entry name" value="GAD"/>
    <property type="match status" value="1"/>
</dbReference>
<dbReference type="Pfam" id="PF00152">
    <property type="entry name" value="tRNA-synt_2"/>
    <property type="match status" value="1"/>
</dbReference>
<dbReference type="Pfam" id="PF01336">
    <property type="entry name" value="tRNA_anti-codon"/>
    <property type="match status" value="1"/>
</dbReference>
<dbReference type="PRINTS" id="PR01042">
    <property type="entry name" value="TRNASYNTHASP"/>
</dbReference>
<dbReference type="SUPFAM" id="SSF55681">
    <property type="entry name" value="Class II aaRS and biotin synthetases"/>
    <property type="match status" value="1"/>
</dbReference>
<dbReference type="SUPFAM" id="SSF55261">
    <property type="entry name" value="GAD domain-like"/>
    <property type="match status" value="1"/>
</dbReference>
<dbReference type="SUPFAM" id="SSF50249">
    <property type="entry name" value="Nucleic acid-binding proteins"/>
    <property type="match status" value="1"/>
</dbReference>
<dbReference type="PROSITE" id="PS50862">
    <property type="entry name" value="AA_TRNA_LIGASE_II"/>
    <property type="match status" value="1"/>
</dbReference>
<proteinExistence type="inferred from homology"/>